<name>YR878_MIMIV</name>
<proteinExistence type="predicted"/>
<accession>Q5URA6</accession>
<evidence type="ECO:0000255" key="1">
    <source>
        <dbReference type="PROSITE-ProRule" id="PRU00631"/>
    </source>
</evidence>
<evidence type="ECO:0000256" key="2">
    <source>
        <dbReference type="SAM" id="MobiDB-lite"/>
    </source>
</evidence>
<keyword id="KW-1185">Reference proteome</keyword>
<feature type="chain" id="PRO_0000244059" description="Putative KilA-N domain-containing protein R878">
    <location>
        <begin position="1"/>
        <end position="356"/>
    </location>
</feature>
<feature type="domain" description="KilA-N" evidence="1">
    <location>
        <begin position="130"/>
        <end position="239"/>
    </location>
</feature>
<feature type="region of interest" description="Disordered" evidence="2">
    <location>
        <begin position="1"/>
        <end position="114"/>
    </location>
</feature>
<feature type="compositionally biased region" description="Basic residues" evidence="2">
    <location>
        <begin position="1"/>
        <end position="12"/>
    </location>
</feature>
<feature type="compositionally biased region" description="Low complexity" evidence="2">
    <location>
        <begin position="14"/>
        <end position="46"/>
    </location>
</feature>
<feature type="compositionally biased region" description="Acidic residues" evidence="2">
    <location>
        <begin position="66"/>
        <end position="114"/>
    </location>
</feature>
<reference key="1">
    <citation type="journal article" date="2004" name="Science">
        <title>The 1.2-megabase genome sequence of Mimivirus.</title>
        <authorList>
            <person name="Raoult D."/>
            <person name="Audic S."/>
            <person name="Robert C."/>
            <person name="Abergel C."/>
            <person name="Renesto P."/>
            <person name="Ogata H."/>
            <person name="La Scola B."/>
            <person name="Susan M."/>
            <person name="Claverie J.-M."/>
        </authorList>
    </citation>
    <scope>NUCLEOTIDE SEQUENCE [LARGE SCALE GENOMIC DNA]</scope>
    <source>
        <strain>Rowbotham-Bradford</strain>
    </source>
</reference>
<organismHost>
    <name type="scientific">Acanthamoeba polyphaga</name>
    <name type="common">Amoeba</name>
    <dbReference type="NCBI Taxonomy" id="5757"/>
</organismHost>
<protein>
    <recommendedName>
        <fullName>Putative KilA-N domain-containing protein R878</fullName>
    </recommendedName>
</protein>
<dbReference type="EMBL" id="AY653733">
    <property type="protein sequence ID" value="AAV51136.1"/>
    <property type="molecule type" value="Genomic_DNA"/>
</dbReference>
<dbReference type="KEGG" id="vg:9925545"/>
<dbReference type="OrthoDB" id="31761at10239"/>
<dbReference type="Proteomes" id="UP000001134">
    <property type="component" value="Genome"/>
</dbReference>
<dbReference type="InterPro" id="IPR018004">
    <property type="entry name" value="KilA/APSES_HTH"/>
</dbReference>
<dbReference type="InterPro" id="IPR017880">
    <property type="entry name" value="KilA_N"/>
</dbReference>
<dbReference type="Pfam" id="PF04383">
    <property type="entry name" value="KilA-N"/>
    <property type="match status" value="1"/>
</dbReference>
<dbReference type="SMART" id="SM01252">
    <property type="entry name" value="KilA-N"/>
    <property type="match status" value="1"/>
</dbReference>
<dbReference type="PROSITE" id="PS51301">
    <property type="entry name" value="KILA_N"/>
    <property type="match status" value="1"/>
</dbReference>
<sequence length="356" mass="41218">MKVRKSNNKPLKRSASFTSGTKTGSKSAKSVNSGSKSMKSTKSSSKSYKKIYEEFSDSESSNSEISDNDELSDNEISDNESSDDDEISDNESSDDDEISDNEISDDDGSDNNVYEDNDIRNIIIEDINDNYSKGKFGNFHVVIMKKNGYMNATKLCDNISNKYKNKKFKHWNENKNSKELIEELSNFLKLPKNELIILKKGGTNTEIRGSYAHPVLITHIAYWISPKFAVRIGFCMEEWKKFCEQNELDYYNMLNMAKPLNNNNKEKIIQHELREKYKGVIEIKTKSGYIDLLTDKYLVEIKDYRNWKSAIGQLLVYSVYYPKKIKCMYLFNVESNDINEIKTICFKYDIVLKIYD</sequence>
<gene>
    <name type="ordered locus">MIMI_R878</name>
</gene>
<organism>
    <name type="scientific">Acanthamoeba polyphaga mimivirus</name>
    <name type="common">APMV</name>
    <dbReference type="NCBI Taxonomy" id="212035"/>
    <lineage>
        <taxon>Viruses</taxon>
        <taxon>Varidnaviria</taxon>
        <taxon>Bamfordvirae</taxon>
        <taxon>Nucleocytoviricota</taxon>
        <taxon>Megaviricetes</taxon>
        <taxon>Imitervirales</taxon>
        <taxon>Mimiviridae</taxon>
        <taxon>Megamimivirinae</taxon>
        <taxon>Mimivirus</taxon>
        <taxon>Mimivirus bradfordmassiliense</taxon>
    </lineage>
</organism>